<feature type="chain" id="PRO_0000304118" description="Uncharacterized protein C83.19c">
    <location>
        <begin position="1"/>
        <end position="119"/>
    </location>
</feature>
<sequence>MVIDIVTNQFSNLQNIKIFTWKANFESIRINLQHMHLYHYEHIHLFTSSQSYMYHPNARFSYSPFCCFTDTLAYLRCEPYRGYRKCIYRKVKMPNLILRNPLVRYDVSPARYPTIGIRS</sequence>
<gene>
    <name type="ORF">SPBC83.19c</name>
</gene>
<protein>
    <recommendedName>
        <fullName>Uncharacterized protein C83.19c</fullName>
    </recommendedName>
</protein>
<evidence type="ECO:0000269" key="1">
    <source>
    </source>
</evidence>
<dbReference type="EMBL" id="CU329671">
    <property type="protein sequence ID" value="CAC34985.1"/>
    <property type="molecule type" value="Genomic_DNA"/>
</dbReference>
<dbReference type="RefSeq" id="NP_595649.1">
    <property type="nucleotide sequence ID" value="NM_001021543.2"/>
</dbReference>
<dbReference type="PaxDb" id="4896-SPBC83.19c.1"/>
<dbReference type="EnsemblFungi" id="SPBC83.19c.1">
    <property type="protein sequence ID" value="SPBC83.19c.1:pep"/>
    <property type="gene ID" value="SPBC83.19c"/>
</dbReference>
<dbReference type="KEGG" id="spo:2541196"/>
<dbReference type="PomBase" id="SPBC83.19c"/>
<dbReference type="VEuPathDB" id="FungiDB:SPBC83.19c"/>
<dbReference type="HOGENOM" id="CLU_2062826_0_0_1"/>
<dbReference type="InParanoid" id="Q9C0W4"/>
<dbReference type="PRO" id="PR:Q9C0W4"/>
<dbReference type="Proteomes" id="UP000002485">
    <property type="component" value="Chromosome II"/>
</dbReference>
<dbReference type="GO" id="GO:0005739">
    <property type="term" value="C:mitochondrion"/>
    <property type="evidence" value="ECO:0007005"/>
    <property type="project" value="PomBase"/>
</dbReference>
<dbReference type="GO" id="GO:0005634">
    <property type="term" value="C:nucleus"/>
    <property type="evidence" value="ECO:0007005"/>
    <property type="project" value="PomBase"/>
</dbReference>
<accession>Q9C0W4</accession>
<keyword id="KW-0496">Mitochondrion</keyword>
<keyword id="KW-0539">Nucleus</keyword>
<keyword id="KW-1185">Reference proteome</keyword>
<name>YG1J_SCHPO</name>
<reference key="1">
    <citation type="journal article" date="2002" name="Nature">
        <title>The genome sequence of Schizosaccharomyces pombe.</title>
        <authorList>
            <person name="Wood V."/>
            <person name="Gwilliam R."/>
            <person name="Rajandream M.A."/>
            <person name="Lyne M.H."/>
            <person name="Lyne R."/>
            <person name="Stewart A."/>
            <person name="Sgouros J.G."/>
            <person name="Peat N."/>
            <person name="Hayles J."/>
            <person name="Baker S.G."/>
            <person name="Basham D."/>
            <person name="Bowman S."/>
            <person name="Brooks K."/>
            <person name="Brown D."/>
            <person name="Brown S."/>
            <person name="Chillingworth T."/>
            <person name="Churcher C.M."/>
            <person name="Collins M."/>
            <person name="Connor R."/>
            <person name="Cronin A."/>
            <person name="Davis P."/>
            <person name="Feltwell T."/>
            <person name="Fraser A."/>
            <person name="Gentles S."/>
            <person name="Goble A."/>
            <person name="Hamlin N."/>
            <person name="Harris D.E."/>
            <person name="Hidalgo J."/>
            <person name="Hodgson G."/>
            <person name="Holroyd S."/>
            <person name="Hornsby T."/>
            <person name="Howarth S."/>
            <person name="Huckle E.J."/>
            <person name="Hunt S."/>
            <person name="Jagels K."/>
            <person name="James K.D."/>
            <person name="Jones L."/>
            <person name="Jones M."/>
            <person name="Leather S."/>
            <person name="McDonald S."/>
            <person name="McLean J."/>
            <person name="Mooney P."/>
            <person name="Moule S."/>
            <person name="Mungall K.L."/>
            <person name="Murphy L.D."/>
            <person name="Niblett D."/>
            <person name="Odell C."/>
            <person name="Oliver K."/>
            <person name="O'Neil S."/>
            <person name="Pearson D."/>
            <person name="Quail M.A."/>
            <person name="Rabbinowitsch E."/>
            <person name="Rutherford K.M."/>
            <person name="Rutter S."/>
            <person name="Saunders D."/>
            <person name="Seeger K."/>
            <person name="Sharp S."/>
            <person name="Skelton J."/>
            <person name="Simmonds M.N."/>
            <person name="Squares R."/>
            <person name="Squares S."/>
            <person name="Stevens K."/>
            <person name="Taylor K."/>
            <person name="Taylor R.G."/>
            <person name="Tivey A."/>
            <person name="Walsh S.V."/>
            <person name="Warren T."/>
            <person name="Whitehead S."/>
            <person name="Woodward J.R."/>
            <person name="Volckaert G."/>
            <person name="Aert R."/>
            <person name="Robben J."/>
            <person name="Grymonprez B."/>
            <person name="Weltjens I."/>
            <person name="Vanstreels E."/>
            <person name="Rieger M."/>
            <person name="Schaefer M."/>
            <person name="Mueller-Auer S."/>
            <person name="Gabel C."/>
            <person name="Fuchs M."/>
            <person name="Duesterhoeft A."/>
            <person name="Fritzc C."/>
            <person name="Holzer E."/>
            <person name="Moestl D."/>
            <person name="Hilbert H."/>
            <person name="Borzym K."/>
            <person name="Langer I."/>
            <person name="Beck A."/>
            <person name="Lehrach H."/>
            <person name="Reinhardt R."/>
            <person name="Pohl T.M."/>
            <person name="Eger P."/>
            <person name="Zimmermann W."/>
            <person name="Wedler H."/>
            <person name="Wambutt R."/>
            <person name="Purnelle B."/>
            <person name="Goffeau A."/>
            <person name="Cadieu E."/>
            <person name="Dreano S."/>
            <person name="Gloux S."/>
            <person name="Lelaure V."/>
            <person name="Mottier S."/>
            <person name="Galibert F."/>
            <person name="Aves S.J."/>
            <person name="Xiang Z."/>
            <person name="Hunt C."/>
            <person name="Moore K."/>
            <person name="Hurst S.M."/>
            <person name="Lucas M."/>
            <person name="Rochet M."/>
            <person name="Gaillardin C."/>
            <person name="Tallada V.A."/>
            <person name="Garzon A."/>
            <person name="Thode G."/>
            <person name="Daga R.R."/>
            <person name="Cruzado L."/>
            <person name="Jimenez J."/>
            <person name="Sanchez M."/>
            <person name="del Rey F."/>
            <person name="Benito J."/>
            <person name="Dominguez A."/>
            <person name="Revuelta J.L."/>
            <person name="Moreno S."/>
            <person name="Armstrong J."/>
            <person name="Forsburg S.L."/>
            <person name="Cerutti L."/>
            <person name="Lowe T."/>
            <person name="McCombie W.R."/>
            <person name="Paulsen I."/>
            <person name="Potashkin J."/>
            <person name="Shpakovski G.V."/>
            <person name="Ussery D."/>
            <person name="Barrell B.G."/>
            <person name="Nurse P."/>
        </authorList>
    </citation>
    <scope>NUCLEOTIDE SEQUENCE [LARGE SCALE GENOMIC DNA]</scope>
    <source>
        <strain>972 / ATCC 24843</strain>
    </source>
</reference>
<reference key="2">
    <citation type="journal article" date="2006" name="Nat. Biotechnol.">
        <title>ORFeome cloning and global analysis of protein localization in the fission yeast Schizosaccharomyces pombe.</title>
        <authorList>
            <person name="Matsuyama A."/>
            <person name="Arai R."/>
            <person name="Yashiroda Y."/>
            <person name="Shirai A."/>
            <person name="Kamata A."/>
            <person name="Sekido S."/>
            <person name="Kobayashi Y."/>
            <person name="Hashimoto A."/>
            <person name="Hamamoto M."/>
            <person name="Hiraoka Y."/>
            <person name="Horinouchi S."/>
            <person name="Yoshida M."/>
        </authorList>
    </citation>
    <scope>SUBCELLULAR LOCATION [LARGE SCALE ANALYSIS]</scope>
</reference>
<organism>
    <name type="scientific">Schizosaccharomyces pombe (strain 972 / ATCC 24843)</name>
    <name type="common">Fission yeast</name>
    <dbReference type="NCBI Taxonomy" id="284812"/>
    <lineage>
        <taxon>Eukaryota</taxon>
        <taxon>Fungi</taxon>
        <taxon>Dikarya</taxon>
        <taxon>Ascomycota</taxon>
        <taxon>Taphrinomycotina</taxon>
        <taxon>Schizosaccharomycetes</taxon>
        <taxon>Schizosaccharomycetales</taxon>
        <taxon>Schizosaccharomycetaceae</taxon>
        <taxon>Schizosaccharomyces</taxon>
    </lineage>
</organism>
<comment type="subcellular location">
    <subcellularLocation>
        <location evidence="1">Mitochondrion</location>
    </subcellularLocation>
    <subcellularLocation>
        <location evidence="1">Nucleus</location>
    </subcellularLocation>
</comment>
<proteinExistence type="predicted"/>